<dbReference type="EMBL" id="AY424295">
    <property type="protein sequence ID" value="AAR08383.1"/>
    <property type="molecule type" value="mRNA"/>
</dbReference>
<dbReference type="EMBL" id="AK139144">
    <property type="protein sequence ID" value="BAE23900.1"/>
    <property type="molecule type" value="mRNA"/>
</dbReference>
<dbReference type="CCDS" id="CCDS17471.1"/>
<dbReference type="RefSeq" id="NP_001297526.1">
    <property type="nucleotide sequence ID" value="NM_001310597.1"/>
</dbReference>
<dbReference type="RefSeq" id="NP_001391037.1">
    <property type="nucleotide sequence ID" value="NM_001404108.1"/>
</dbReference>
<dbReference type="RefSeq" id="NP_940802.1">
    <property type="nucleotide sequence ID" value="NM_198410.3"/>
</dbReference>
<dbReference type="SMR" id="Q6TCG5"/>
<dbReference type="FunCoup" id="Q6TCG5">
    <property type="interactions" value="381"/>
</dbReference>
<dbReference type="STRING" id="10090.ENSMUSP00000114166"/>
<dbReference type="iPTMnet" id="Q6TCG5"/>
<dbReference type="PhosphoSitePlus" id="Q6TCG5"/>
<dbReference type="PaxDb" id="10090-ENSMUSP00000114166"/>
<dbReference type="ProteomicsDB" id="287950"/>
<dbReference type="Antibodypedia" id="2553">
    <property type="antibodies" value="98 antibodies from 16 providers"/>
</dbReference>
<dbReference type="DNASU" id="68957"/>
<dbReference type="Ensembl" id="ENSMUST00000147991.2">
    <property type="protein sequence ID" value="ENSMUSP00000114166.2"/>
    <property type="gene ID" value="ENSMUSG00000041423.17"/>
</dbReference>
<dbReference type="GeneID" id="68957"/>
<dbReference type="KEGG" id="mmu:68957"/>
<dbReference type="UCSC" id="uc012crs.1">
    <property type="organism name" value="mouse"/>
</dbReference>
<dbReference type="AGR" id="MGI:1916207"/>
<dbReference type="CTD" id="79957"/>
<dbReference type="MGI" id="MGI:1916207">
    <property type="gene designation" value="Paqr6"/>
</dbReference>
<dbReference type="VEuPathDB" id="HostDB:ENSMUSG00000041423"/>
<dbReference type="eggNOG" id="KOG0748">
    <property type="taxonomic scope" value="Eukaryota"/>
</dbReference>
<dbReference type="GeneTree" id="ENSGT00940000160567"/>
<dbReference type="HOGENOM" id="CLU_052356_1_0_1"/>
<dbReference type="InParanoid" id="Q6TCG5"/>
<dbReference type="OMA" id="TSCCAHT"/>
<dbReference type="OrthoDB" id="529367at2759"/>
<dbReference type="PhylomeDB" id="Q6TCG5"/>
<dbReference type="TreeFam" id="TF319738"/>
<dbReference type="BioGRID-ORCS" id="68957">
    <property type="hits" value="4 hits in 82 CRISPR screens"/>
</dbReference>
<dbReference type="ChiTaRS" id="Paqr6">
    <property type="organism name" value="mouse"/>
</dbReference>
<dbReference type="PRO" id="PR:Q6TCG5"/>
<dbReference type="Proteomes" id="UP000000589">
    <property type="component" value="Chromosome 3"/>
</dbReference>
<dbReference type="RNAct" id="Q6TCG5">
    <property type="molecule type" value="protein"/>
</dbReference>
<dbReference type="Bgee" id="ENSMUSG00000041423">
    <property type="expression patterns" value="Expressed in hypothalamus and 70 other cell types or tissues"/>
</dbReference>
<dbReference type="ExpressionAtlas" id="Q6TCG5">
    <property type="expression patterns" value="baseline and differential"/>
</dbReference>
<dbReference type="GO" id="GO:0005886">
    <property type="term" value="C:plasma membrane"/>
    <property type="evidence" value="ECO:0007669"/>
    <property type="project" value="UniProtKB-SubCell"/>
</dbReference>
<dbReference type="GO" id="GO:0005496">
    <property type="term" value="F:steroid binding"/>
    <property type="evidence" value="ECO:0007669"/>
    <property type="project" value="UniProtKB-KW"/>
</dbReference>
<dbReference type="InterPro" id="IPR004254">
    <property type="entry name" value="AdipoR/HlyIII-related"/>
</dbReference>
<dbReference type="PANTHER" id="PTHR20855">
    <property type="entry name" value="ADIPOR/PROGESTIN RECEPTOR-RELATED"/>
    <property type="match status" value="1"/>
</dbReference>
<dbReference type="PANTHER" id="PTHR20855:SF39">
    <property type="entry name" value="MEMBRANE PROGESTIN RECEPTOR DELTA"/>
    <property type="match status" value="1"/>
</dbReference>
<dbReference type="Pfam" id="PF03006">
    <property type="entry name" value="HlyIII"/>
    <property type="match status" value="1"/>
</dbReference>
<comment type="function">
    <text evidence="1">Plasma membrane progesterone (P4) receptor coupled to G proteins. Seems to act through a G(s) mediated pathway. Involved in neurosteroid inhibition of apoptosis. May be involved in regulating rapid P4 signaling in the nervous system. Also binds dehydroepiandrosterone (DHEA), pregnanolone, pregnenolone and allopregnanolone.</text>
</comment>
<comment type="subunit">
    <text evidence="1">Homodimer.</text>
</comment>
<comment type="subcellular location">
    <subcellularLocation>
        <location evidence="1">Cell membrane</location>
        <topology evidence="2">Multi-pass membrane protein</topology>
    </subcellularLocation>
</comment>
<comment type="miscellaneous">
    <text evidence="1">Non-classical progesterone receptors involved in extranuclear signaling are classified in 2 groups: the class II progestin and adipoQ receptor (PAQR) family (also called mPRs) (PAQR5, PAQR6, PAQR7, PAQR8 and PAQR9) and the b5-like heme/steroid-binding protein family (also called MAPRs) (PGRMC1, PGRMC2, NENF and CYB5D2).</text>
</comment>
<comment type="similarity">
    <text evidence="3">Belongs to the ADIPOR family.</text>
</comment>
<gene>
    <name evidence="4" type="primary">Paqr6</name>
</gene>
<feature type="chain" id="PRO_0000218851" description="Membrane progestin receptor delta">
    <location>
        <begin position="1"/>
        <end position="343"/>
    </location>
</feature>
<feature type="topological domain" description="Cytoplasmic" evidence="2">
    <location>
        <begin position="1"/>
        <end position="49"/>
    </location>
</feature>
<feature type="transmembrane region" description="Helical" evidence="2">
    <location>
        <begin position="50"/>
        <end position="70"/>
    </location>
</feature>
<feature type="topological domain" description="Extracellular" evidence="2">
    <location>
        <begin position="71"/>
        <end position="79"/>
    </location>
</feature>
<feature type="transmembrane region" description="Helical" evidence="2">
    <location>
        <begin position="80"/>
        <end position="100"/>
    </location>
</feature>
<feature type="topological domain" description="Cytoplasmic" evidence="2">
    <location>
        <begin position="101"/>
        <end position="112"/>
    </location>
</feature>
<feature type="transmembrane region" description="Helical" evidence="2">
    <location>
        <begin position="113"/>
        <end position="133"/>
    </location>
</feature>
<feature type="topological domain" description="Extracellular" evidence="2">
    <location>
        <begin position="134"/>
        <end position="146"/>
    </location>
</feature>
<feature type="transmembrane region" description="Helical" evidence="2">
    <location>
        <begin position="147"/>
        <end position="167"/>
    </location>
</feature>
<feature type="topological domain" description="Cytoplasmic" evidence="2">
    <location>
        <begin position="168"/>
        <end position="216"/>
    </location>
</feature>
<feature type="transmembrane region" description="Helical" evidence="2">
    <location>
        <begin position="217"/>
        <end position="237"/>
    </location>
</feature>
<feature type="topological domain" description="Extracellular" evidence="2">
    <location>
        <begin position="238"/>
        <end position="257"/>
    </location>
</feature>
<feature type="transmembrane region" description="Helical" evidence="2">
    <location>
        <begin position="258"/>
        <end position="278"/>
    </location>
</feature>
<feature type="topological domain" description="Cytoplasmic" evidence="2">
    <location>
        <begin position="279"/>
        <end position="291"/>
    </location>
</feature>
<feature type="transmembrane region" description="Helical" evidence="2">
    <location>
        <begin position="292"/>
        <end position="312"/>
    </location>
</feature>
<feature type="topological domain" description="Extracellular" evidence="2">
    <location>
        <begin position="313"/>
        <end position="343"/>
    </location>
</feature>
<reference key="1">
    <citation type="journal article" date="2005" name="J. Mol. Evol.">
        <title>PAQR proteins: a novel membrane receptor family defined by an ancient 7-transmembrane pass motif.</title>
        <authorList>
            <person name="Tang Y.T."/>
            <person name="Hu T."/>
            <person name="Arterburn M."/>
            <person name="Boyle B."/>
            <person name="Bright J.M."/>
            <person name="Emtage P.C."/>
            <person name="Funk W.D."/>
        </authorList>
    </citation>
    <scope>NUCLEOTIDE SEQUENCE [MRNA]</scope>
    <source>
        <strain>C57BL/6J</strain>
    </source>
</reference>
<reference key="2">
    <citation type="journal article" date="2005" name="Science">
        <title>The transcriptional landscape of the mammalian genome.</title>
        <authorList>
            <person name="Carninci P."/>
            <person name="Kasukawa T."/>
            <person name="Katayama S."/>
            <person name="Gough J."/>
            <person name="Frith M.C."/>
            <person name="Maeda N."/>
            <person name="Oyama R."/>
            <person name="Ravasi T."/>
            <person name="Lenhard B."/>
            <person name="Wells C."/>
            <person name="Kodzius R."/>
            <person name="Shimokawa K."/>
            <person name="Bajic V.B."/>
            <person name="Brenner S.E."/>
            <person name="Batalov S."/>
            <person name="Forrest A.R."/>
            <person name="Zavolan M."/>
            <person name="Davis M.J."/>
            <person name="Wilming L.G."/>
            <person name="Aidinis V."/>
            <person name="Allen J.E."/>
            <person name="Ambesi-Impiombato A."/>
            <person name="Apweiler R."/>
            <person name="Aturaliya R.N."/>
            <person name="Bailey T.L."/>
            <person name="Bansal M."/>
            <person name="Baxter L."/>
            <person name="Beisel K.W."/>
            <person name="Bersano T."/>
            <person name="Bono H."/>
            <person name="Chalk A.M."/>
            <person name="Chiu K.P."/>
            <person name="Choudhary V."/>
            <person name="Christoffels A."/>
            <person name="Clutterbuck D.R."/>
            <person name="Crowe M.L."/>
            <person name="Dalla E."/>
            <person name="Dalrymple B.P."/>
            <person name="de Bono B."/>
            <person name="Della Gatta G."/>
            <person name="di Bernardo D."/>
            <person name="Down T."/>
            <person name="Engstrom P."/>
            <person name="Fagiolini M."/>
            <person name="Faulkner G."/>
            <person name="Fletcher C.F."/>
            <person name="Fukushima T."/>
            <person name="Furuno M."/>
            <person name="Futaki S."/>
            <person name="Gariboldi M."/>
            <person name="Georgii-Hemming P."/>
            <person name="Gingeras T.R."/>
            <person name="Gojobori T."/>
            <person name="Green R.E."/>
            <person name="Gustincich S."/>
            <person name="Harbers M."/>
            <person name="Hayashi Y."/>
            <person name="Hensch T.K."/>
            <person name="Hirokawa N."/>
            <person name="Hill D."/>
            <person name="Huminiecki L."/>
            <person name="Iacono M."/>
            <person name="Ikeo K."/>
            <person name="Iwama A."/>
            <person name="Ishikawa T."/>
            <person name="Jakt M."/>
            <person name="Kanapin A."/>
            <person name="Katoh M."/>
            <person name="Kawasawa Y."/>
            <person name="Kelso J."/>
            <person name="Kitamura H."/>
            <person name="Kitano H."/>
            <person name="Kollias G."/>
            <person name="Krishnan S.P."/>
            <person name="Kruger A."/>
            <person name="Kummerfeld S.K."/>
            <person name="Kurochkin I.V."/>
            <person name="Lareau L.F."/>
            <person name="Lazarevic D."/>
            <person name="Lipovich L."/>
            <person name="Liu J."/>
            <person name="Liuni S."/>
            <person name="McWilliam S."/>
            <person name="Madan Babu M."/>
            <person name="Madera M."/>
            <person name="Marchionni L."/>
            <person name="Matsuda H."/>
            <person name="Matsuzawa S."/>
            <person name="Miki H."/>
            <person name="Mignone F."/>
            <person name="Miyake S."/>
            <person name="Morris K."/>
            <person name="Mottagui-Tabar S."/>
            <person name="Mulder N."/>
            <person name="Nakano N."/>
            <person name="Nakauchi H."/>
            <person name="Ng P."/>
            <person name="Nilsson R."/>
            <person name="Nishiguchi S."/>
            <person name="Nishikawa S."/>
            <person name="Nori F."/>
            <person name="Ohara O."/>
            <person name="Okazaki Y."/>
            <person name="Orlando V."/>
            <person name="Pang K.C."/>
            <person name="Pavan W.J."/>
            <person name="Pavesi G."/>
            <person name="Pesole G."/>
            <person name="Petrovsky N."/>
            <person name="Piazza S."/>
            <person name="Reed J."/>
            <person name="Reid J.F."/>
            <person name="Ring B.Z."/>
            <person name="Ringwald M."/>
            <person name="Rost B."/>
            <person name="Ruan Y."/>
            <person name="Salzberg S.L."/>
            <person name="Sandelin A."/>
            <person name="Schneider C."/>
            <person name="Schoenbach C."/>
            <person name="Sekiguchi K."/>
            <person name="Semple C.A."/>
            <person name="Seno S."/>
            <person name="Sessa L."/>
            <person name="Sheng Y."/>
            <person name="Shibata Y."/>
            <person name="Shimada H."/>
            <person name="Shimada K."/>
            <person name="Silva D."/>
            <person name="Sinclair B."/>
            <person name="Sperling S."/>
            <person name="Stupka E."/>
            <person name="Sugiura K."/>
            <person name="Sultana R."/>
            <person name="Takenaka Y."/>
            <person name="Taki K."/>
            <person name="Tammoja K."/>
            <person name="Tan S.L."/>
            <person name="Tang S."/>
            <person name="Taylor M.S."/>
            <person name="Tegner J."/>
            <person name="Teichmann S.A."/>
            <person name="Ueda H.R."/>
            <person name="van Nimwegen E."/>
            <person name="Verardo R."/>
            <person name="Wei C.L."/>
            <person name="Yagi K."/>
            <person name="Yamanishi H."/>
            <person name="Zabarovsky E."/>
            <person name="Zhu S."/>
            <person name="Zimmer A."/>
            <person name="Hide W."/>
            <person name="Bult C."/>
            <person name="Grimmond S.M."/>
            <person name="Teasdale R.D."/>
            <person name="Liu E.T."/>
            <person name="Brusic V."/>
            <person name="Quackenbush J."/>
            <person name="Wahlestedt C."/>
            <person name="Mattick J.S."/>
            <person name="Hume D.A."/>
            <person name="Kai C."/>
            <person name="Sasaki D."/>
            <person name="Tomaru Y."/>
            <person name="Fukuda S."/>
            <person name="Kanamori-Katayama M."/>
            <person name="Suzuki M."/>
            <person name="Aoki J."/>
            <person name="Arakawa T."/>
            <person name="Iida J."/>
            <person name="Imamura K."/>
            <person name="Itoh M."/>
            <person name="Kato T."/>
            <person name="Kawaji H."/>
            <person name="Kawagashira N."/>
            <person name="Kawashima T."/>
            <person name="Kojima M."/>
            <person name="Kondo S."/>
            <person name="Konno H."/>
            <person name="Nakano K."/>
            <person name="Ninomiya N."/>
            <person name="Nishio T."/>
            <person name="Okada M."/>
            <person name="Plessy C."/>
            <person name="Shibata K."/>
            <person name="Shiraki T."/>
            <person name="Suzuki S."/>
            <person name="Tagami M."/>
            <person name="Waki K."/>
            <person name="Watahiki A."/>
            <person name="Okamura-Oho Y."/>
            <person name="Suzuki H."/>
            <person name="Kawai J."/>
            <person name="Hayashizaki Y."/>
        </authorList>
    </citation>
    <scope>NUCLEOTIDE SEQUENCE [LARGE SCALE MRNA]</scope>
    <source>
        <strain>C57BL/6J</strain>
        <tissue>Cerebellum</tissue>
    </source>
</reference>
<keyword id="KW-1003">Cell membrane</keyword>
<keyword id="KW-0446">Lipid-binding</keyword>
<keyword id="KW-0472">Membrane</keyword>
<keyword id="KW-0675">Receptor</keyword>
<keyword id="KW-1185">Reference proteome</keyword>
<keyword id="KW-0754">Steroid-binding</keyword>
<keyword id="KW-0812">Transmembrane</keyword>
<keyword id="KW-1133">Transmembrane helix</keyword>
<name>PAQR6_MOUSE</name>
<evidence type="ECO:0000250" key="1">
    <source>
        <dbReference type="UniProtKB" id="Q6TCH4"/>
    </source>
</evidence>
<evidence type="ECO:0000255" key="2"/>
<evidence type="ECO:0000305" key="3"/>
<evidence type="ECO:0000312" key="4">
    <source>
        <dbReference type="MGI" id="MGI:1916207"/>
    </source>
</evidence>
<proteinExistence type="evidence at transcript level"/>
<organism>
    <name type="scientific">Mus musculus</name>
    <name type="common">Mouse</name>
    <dbReference type="NCBI Taxonomy" id="10090"/>
    <lineage>
        <taxon>Eukaryota</taxon>
        <taxon>Metazoa</taxon>
        <taxon>Chordata</taxon>
        <taxon>Craniata</taxon>
        <taxon>Vertebrata</taxon>
        <taxon>Euteleostomi</taxon>
        <taxon>Mammalia</taxon>
        <taxon>Eutheria</taxon>
        <taxon>Euarchontoglires</taxon>
        <taxon>Glires</taxon>
        <taxon>Rodentia</taxon>
        <taxon>Myomorpha</taxon>
        <taxon>Muroidea</taxon>
        <taxon>Muridae</taxon>
        <taxon>Murinae</taxon>
        <taxon>Mus</taxon>
        <taxon>Mus</taxon>
    </lineage>
</organism>
<protein>
    <recommendedName>
        <fullName evidence="1">Membrane progestin receptor delta</fullName>
        <shortName evidence="1">mPR delta</shortName>
    </recommendedName>
    <alternativeName>
        <fullName evidence="1">Membrane progesterone P4 receptor delta</fullName>
    </alternativeName>
    <alternativeName>
        <fullName evidence="1">Membrane progesterone receptor delta</fullName>
    </alternativeName>
    <alternativeName>
        <fullName>Progesterone and adipoQ receptor family member 6</fullName>
    </alternativeName>
    <alternativeName>
        <fullName>Progestin and adipoQ receptor family member 6</fullName>
    </alternativeName>
    <alternativeName>
        <fullName evidence="1">Progestin and adipoQ receptor family member VI</fullName>
    </alternativeName>
</protein>
<accession>Q6TCG5</accession>
<accession>Q3UTT0</accession>
<accession>Q8CF56</accession>
<sequence>MLSLKMPQLLRVHQVPRVFWEEGIMSGYRCPTSSALDCVLSSFQMTNETVNIWTHFLPTWYFLWRLLALGSPGFRADPYHLPLLVFLLPACLYPFASCCAHTFSSMSPRARHICYFLDYGALSLYSLGCAFPYAAYSMPASWLHSRLHQLFVPAAALNSFLCTGLSCYSRFPELEYPGFSKALRTAAFAYPFLFDNLPLFYRLRLCWGGAHSCGRDALSSNHGYHLLCALLSGFLFAARLPERLAPGRFDYIGHSHQLFHICAVLGTHFQLEAVLADMGSRRAWLAVQEPTLGLGATVATLSLAVIGNLFIIAAFTASLLRMPGPCPLLQGSPLEEGLQAKQQ</sequence>